<gene>
    <name evidence="1" type="primary">pyrD</name>
    <name type="ordered locus">lpl1785</name>
</gene>
<proteinExistence type="inferred from homology"/>
<protein>
    <recommendedName>
        <fullName evidence="1">Dihydroorotate dehydrogenase (quinone)</fullName>
        <ecNumber evidence="1">1.3.5.2</ecNumber>
    </recommendedName>
    <alternativeName>
        <fullName evidence="1">DHOdehase</fullName>
        <shortName evidence="1">DHOD</shortName>
        <shortName evidence="1">DHODase</shortName>
    </alternativeName>
    <alternativeName>
        <fullName evidence="1">Dihydroorotate oxidase</fullName>
    </alternativeName>
</protein>
<comment type="function">
    <text evidence="1">Catalyzes the conversion of dihydroorotate to orotate with quinone as electron acceptor.</text>
</comment>
<comment type="catalytic activity">
    <reaction evidence="1">
        <text>(S)-dihydroorotate + a quinone = orotate + a quinol</text>
        <dbReference type="Rhea" id="RHEA:30187"/>
        <dbReference type="ChEBI" id="CHEBI:24646"/>
        <dbReference type="ChEBI" id="CHEBI:30839"/>
        <dbReference type="ChEBI" id="CHEBI:30864"/>
        <dbReference type="ChEBI" id="CHEBI:132124"/>
        <dbReference type="EC" id="1.3.5.2"/>
    </reaction>
</comment>
<comment type="cofactor">
    <cofactor evidence="1">
        <name>FMN</name>
        <dbReference type="ChEBI" id="CHEBI:58210"/>
    </cofactor>
    <text evidence="1">Binds 1 FMN per subunit.</text>
</comment>
<comment type="pathway">
    <text evidence="1">Pyrimidine metabolism; UMP biosynthesis via de novo pathway; orotate from (S)-dihydroorotate (quinone route): step 1/1.</text>
</comment>
<comment type="subunit">
    <text evidence="1">Monomer.</text>
</comment>
<comment type="subcellular location">
    <subcellularLocation>
        <location evidence="1">Cell membrane</location>
        <topology evidence="1">Peripheral membrane protein</topology>
    </subcellularLocation>
</comment>
<comment type="similarity">
    <text evidence="1">Belongs to the dihydroorotate dehydrogenase family. Type 2 subfamily.</text>
</comment>
<name>PYRD_LEGPL</name>
<accession>Q5WVN0</accession>
<organism>
    <name type="scientific">Legionella pneumophila (strain Lens)</name>
    <dbReference type="NCBI Taxonomy" id="297245"/>
    <lineage>
        <taxon>Bacteria</taxon>
        <taxon>Pseudomonadati</taxon>
        <taxon>Pseudomonadota</taxon>
        <taxon>Gammaproteobacteria</taxon>
        <taxon>Legionellales</taxon>
        <taxon>Legionellaceae</taxon>
        <taxon>Legionella</taxon>
    </lineage>
</organism>
<keyword id="KW-1003">Cell membrane</keyword>
<keyword id="KW-0285">Flavoprotein</keyword>
<keyword id="KW-0288">FMN</keyword>
<keyword id="KW-0472">Membrane</keyword>
<keyword id="KW-0560">Oxidoreductase</keyword>
<keyword id="KW-0665">Pyrimidine biosynthesis</keyword>
<dbReference type="EC" id="1.3.5.2" evidence="1"/>
<dbReference type="EMBL" id="CR628337">
    <property type="protein sequence ID" value="CAH16024.1"/>
    <property type="molecule type" value="Genomic_DNA"/>
</dbReference>
<dbReference type="RefSeq" id="WP_011215792.1">
    <property type="nucleotide sequence ID" value="NC_006369.1"/>
</dbReference>
<dbReference type="SMR" id="Q5WVN0"/>
<dbReference type="KEGG" id="lpf:lpl1785"/>
<dbReference type="LegioList" id="lpl1785"/>
<dbReference type="HOGENOM" id="CLU_013640_2_0_6"/>
<dbReference type="UniPathway" id="UPA00070">
    <property type="reaction ID" value="UER00946"/>
</dbReference>
<dbReference type="Proteomes" id="UP000002517">
    <property type="component" value="Chromosome"/>
</dbReference>
<dbReference type="GO" id="GO:0005737">
    <property type="term" value="C:cytoplasm"/>
    <property type="evidence" value="ECO:0007669"/>
    <property type="project" value="InterPro"/>
</dbReference>
<dbReference type="GO" id="GO:0005886">
    <property type="term" value="C:plasma membrane"/>
    <property type="evidence" value="ECO:0007669"/>
    <property type="project" value="UniProtKB-SubCell"/>
</dbReference>
<dbReference type="GO" id="GO:0106430">
    <property type="term" value="F:dihydroorotate dehydrogenase (quinone) activity"/>
    <property type="evidence" value="ECO:0007669"/>
    <property type="project" value="UniProtKB-EC"/>
</dbReference>
<dbReference type="GO" id="GO:0006207">
    <property type="term" value="P:'de novo' pyrimidine nucleobase biosynthetic process"/>
    <property type="evidence" value="ECO:0007669"/>
    <property type="project" value="InterPro"/>
</dbReference>
<dbReference type="GO" id="GO:0044205">
    <property type="term" value="P:'de novo' UMP biosynthetic process"/>
    <property type="evidence" value="ECO:0007669"/>
    <property type="project" value="UniProtKB-UniRule"/>
</dbReference>
<dbReference type="CDD" id="cd04738">
    <property type="entry name" value="DHOD_2_like"/>
    <property type="match status" value="1"/>
</dbReference>
<dbReference type="Gene3D" id="3.20.20.70">
    <property type="entry name" value="Aldolase class I"/>
    <property type="match status" value="1"/>
</dbReference>
<dbReference type="HAMAP" id="MF_00225">
    <property type="entry name" value="DHO_dh_type2"/>
    <property type="match status" value="1"/>
</dbReference>
<dbReference type="InterPro" id="IPR013785">
    <property type="entry name" value="Aldolase_TIM"/>
</dbReference>
<dbReference type="InterPro" id="IPR050074">
    <property type="entry name" value="DHO_dehydrogenase"/>
</dbReference>
<dbReference type="InterPro" id="IPR012135">
    <property type="entry name" value="Dihydroorotate_DH_1_2"/>
</dbReference>
<dbReference type="InterPro" id="IPR005719">
    <property type="entry name" value="Dihydroorotate_DH_2"/>
</dbReference>
<dbReference type="InterPro" id="IPR005720">
    <property type="entry name" value="Dihydroorotate_DH_cat"/>
</dbReference>
<dbReference type="InterPro" id="IPR001295">
    <property type="entry name" value="Dihydroorotate_DH_CS"/>
</dbReference>
<dbReference type="NCBIfam" id="NF003644">
    <property type="entry name" value="PRK05286.1-1"/>
    <property type="match status" value="1"/>
</dbReference>
<dbReference type="NCBIfam" id="NF003645">
    <property type="entry name" value="PRK05286.1-2"/>
    <property type="match status" value="1"/>
</dbReference>
<dbReference type="NCBIfam" id="NF003646">
    <property type="entry name" value="PRK05286.1-4"/>
    <property type="match status" value="1"/>
</dbReference>
<dbReference type="NCBIfam" id="NF003652">
    <property type="entry name" value="PRK05286.2-5"/>
    <property type="match status" value="1"/>
</dbReference>
<dbReference type="NCBIfam" id="TIGR01036">
    <property type="entry name" value="pyrD_sub2"/>
    <property type="match status" value="1"/>
</dbReference>
<dbReference type="PANTHER" id="PTHR48109:SF4">
    <property type="entry name" value="DIHYDROOROTATE DEHYDROGENASE (QUINONE), MITOCHONDRIAL"/>
    <property type="match status" value="1"/>
</dbReference>
<dbReference type="PANTHER" id="PTHR48109">
    <property type="entry name" value="DIHYDROOROTATE DEHYDROGENASE (QUINONE), MITOCHONDRIAL-RELATED"/>
    <property type="match status" value="1"/>
</dbReference>
<dbReference type="Pfam" id="PF01180">
    <property type="entry name" value="DHO_dh"/>
    <property type="match status" value="1"/>
</dbReference>
<dbReference type="PIRSF" id="PIRSF000164">
    <property type="entry name" value="DHO_oxidase"/>
    <property type="match status" value="1"/>
</dbReference>
<dbReference type="SUPFAM" id="SSF51395">
    <property type="entry name" value="FMN-linked oxidoreductases"/>
    <property type="match status" value="1"/>
</dbReference>
<dbReference type="PROSITE" id="PS00911">
    <property type="entry name" value="DHODEHASE_1"/>
    <property type="match status" value="1"/>
</dbReference>
<dbReference type="PROSITE" id="PS00912">
    <property type="entry name" value="DHODEHASE_2"/>
    <property type="match status" value="1"/>
</dbReference>
<evidence type="ECO:0000255" key="1">
    <source>
        <dbReference type="HAMAP-Rule" id="MF_00225"/>
    </source>
</evidence>
<feature type="chain" id="PRO_0000148450" description="Dihydroorotate dehydrogenase (quinone)">
    <location>
        <begin position="1"/>
        <end position="333"/>
    </location>
</feature>
<feature type="active site" description="Nucleophile" evidence="1">
    <location>
        <position position="169"/>
    </location>
</feature>
<feature type="binding site" evidence="1">
    <location>
        <begin position="56"/>
        <end position="60"/>
    </location>
    <ligand>
        <name>FMN</name>
        <dbReference type="ChEBI" id="CHEBI:58210"/>
    </ligand>
</feature>
<feature type="binding site" evidence="1">
    <location>
        <position position="60"/>
    </location>
    <ligand>
        <name>substrate</name>
    </ligand>
</feature>
<feature type="binding site" evidence="1">
    <location>
        <position position="80"/>
    </location>
    <ligand>
        <name>FMN</name>
        <dbReference type="ChEBI" id="CHEBI:58210"/>
    </ligand>
</feature>
<feature type="binding site" evidence="1">
    <location>
        <begin position="105"/>
        <end position="109"/>
    </location>
    <ligand>
        <name>substrate</name>
    </ligand>
</feature>
<feature type="binding site" evidence="1">
    <location>
        <position position="133"/>
    </location>
    <ligand>
        <name>FMN</name>
        <dbReference type="ChEBI" id="CHEBI:58210"/>
    </ligand>
</feature>
<feature type="binding site" evidence="1">
    <location>
        <position position="166"/>
    </location>
    <ligand>
        <name>FMN</name>
        <dbReference type="ChEBI" id="CHEBI:58210"/>
    </ligand>
</feature>
<feature type="binding site" evidence="1">
    <location>
        <position position="166"/>
    </location>
    <ligand>
        <name>substrate</name>
    </ligand>
</feature>
<feature type="binding site" evidence="1">
    <location>
        <position position="171"/>
    </location>
    <ligand>
        <name>substrate</name>
    </ligand>
</feature>
<feature type="binding site" evidence="1">
    <location>
        <position position="211"/>
    </location>
    <ligand>
        <name>FMN</name>
        <dbReference type="ChEBI" id="CHEBI:58210"/>
    </ligand>
</feature>
<feature type="binding site" evidence="1">
    <location>
        <position position="239"/>
    </location>
    <ligand>
        <name>FMN</name>
        <dbReference type="ChEBI" id="CHEBI:58210"/>
    </ligand>
</feature>
<feature type="binding site" evidence="1">
    <location>
        <begin position="240"/>
        <end position="241"/>
    </location>
    <ligand>
        <name>substrate</name>
    </ligand>
</feature>
<feature type="binding site" evidence="1">
    <location>
        <position position="262"/>
    </location>
    <ligand>
        <name>FMN</name>
        <dbReference type="ChEBI" id="CHEBI:58210"/>
    </ligand>
</feature>
<feature type="binding site" evidence="1">
    <location>
        <position position="291"/>
    </location>
    <ligand>
        <name>FMN</name>
        <dbReference type="ChEBI" id="CHEBI:58210"/>
    </ligand>
</feature>
<feature type="binding site" evidence="1">
    <location>
        <begin position="312"/>
        <end position="313"/>
    </location>
    <ligand>
        <name>FMN</name>
        <dbReference type="ChEBI" id="CHEBI:58210"/>
    </ligand>
</feature>
<sequence length="333" mass="36579">MYSLLRPLLFRLDAEKAHSLTLSLLHYLPGFYFRKMAGQPVHAMGLVFPHQVGLAAGLDKNGEHLDALAKLGFSFIELGTVTPKGQTGNPKPRLFRIAEANAIINRMGFNNSGVDVLVENVKSANYKGILGINIGKNKETNLNQAADDYLYCFRKVYDHASYVTINISSPNTPDLRQLQQGDYFAELLAQLQKEQIKLADQYGRHVPLVVKVSPDETDETLKQMTDIILQYGIEGIIATNTTCSREMVKNLPCSEEQGGLSGRPLMELSTRCLRLLKQYVGNDVTLIGVGGIDSLESAKDKINAGASLLQVYSGLVYKGPELIHDIVSGLNAV</sequence>
<reference key="1">
    <citation type="journal article" date="2004" name="Nat. Genet.">
        <title>Evidence in the Legionella pneumophila genome for exploitation of host cell functions and high genome plasticity.</title>
        <authorList>
            <person name="Cazalet C."/>
            <person name="Rusniok C."/>
            <person name="Brueggemann H."/>
            <person name="Zidane N."/>
            <person name="Magnier A."/>
            <person name="Ma L."/>
            <person name="Tichit M."/>
            <person name="Jarraud S."/>
            <person name="Bouchier C."/>
            <person name="Vandenesch F."/>
            <person name="Kunst F."/>
            <person name="Etienne J."/>
            <person name="Glaser P."/>
            <person name="Buchrieser C."/>
        </authorList>
    </citation>
    <scope>NUCLEOTIDE SEQUENCE [LARGE SCALE GENOMIC DNA]</scope>
    <source>
        <strain>Lens</strain>
    </source>
</reference>